<proteinExistence type="inferred from homology"/>
<reference key="1">
    <citation type="journal article" date="2009" name="Appl. Environ. Microbiol.">
        <title>Three genomes from the phylum Acidobacteria provide insight into the lifestyles of these microorganisms in soils.</title>
        <authorList>
            <person name="Ward N.L."/>
            <person name="Challacombe J.F."/>
            <person name="Janssen P.H."/>
            <person name="Henrissat B."/>
            <person name="Coutinho P.M."/>
            <person name="Wu M."/>
            <person name="Xie G."/>
            <person name="Haft D.H."/>
            <person name="Sait M."/>
            <person name="Badger J."/>
            <person name="Barabote R.D."/>
            <person name="Bradley B."/>
            <person name="Brettin T.S."/>
            <person name="Brinkac L.M."/>
            <person name="Bruce D."/>
            <person name="Creasy T."/>
            <person name="Daugherty S.C."/>
            <person name="Davidsen T.M."/>
            <person name="DeBoy R.T."/>
            <person name="Detter J.C."/>
            <person name="Dodson R.J."/>
            <person name="Durkin A.S."/>
            <person name="Ganapathy A."/>
            <person name="Gwinn-Giglio M."/>
            <person name="Han C.S."/>
            <person name="Khouri H."/>
            <person name="Kiss H."/>
            <person name="Kothari S.P."/>
            <person name="Madupu R."/>
            <person name="Nelson K.E."/>
            <person name="Nelson W.C."/>
            <person name="Paulsen I."/>
            <person name="Penn K."/>
            <person name="Ren Q."/>
            <person name="Rosovitz M.J."/>
            <person name="Selengut J.D."/>
            <person name="Shrivastava S."/>
            <person name="Sullivan S.A."/>
            <person name="Tapia R."/>
            <person name="Thompson L.S."/>
            <person name="Watkins K.L."/>
            <person name="Yang Q."/>
            <person name="Yu C."/>
            <person name="Zafar N."/>
            <person name="Zhou L."/>
            <person name="Kuske C.R."/>
        </authorList>
    </citation>
    <scope>NUCLEOTIDE SEQUENCE [LARGE SCALE GENOMIC DNA]</scope>
    <source>
        <strain>Ellin345</strain>
    </source>
</reference>
<gene>
    <name evidence="1" type="primary">rsmA</name>
    <name evidence="1" type="synonym">ksgA</name>
    <name type="ordered locus">Acid345_3348</name>
</gene>
<organism>
    <name type="scientific">Koribacter versatilis (strain Ellin345)</name>
    <dbReference type="NCBI Taxonomy" id="204669"/>
    <lineage>
        <taxon>Bacteria</taxon>
        <taxon>Pseudomonadati</taxon>
        <taxon>Acidobacteriota</taxon>
        <taxon>Terriglobia</taxon>
        <taxon>Terriglobales</taxon>
        <taxon>Candidatus Korobacteraceae</taxon>
        <taxon>Candidatus Korobacter</taxon>
    </lineage>
</organism>
<protein>
    <recommendedName>
        <fullName evidence="1">Ribosomal RNA small subunit methyltransferase A</fullName>
        <ecNumber evidence="1">2.1.1.182</ecNumber>
    </recommendedName>
    <alternativeName>
        <fullName evidence="1">16S rRNA (adenine(1518)-N(6)/adenine(1519)-N(6))-dimethyltransferase</fullName>
    </alternativeName>
    <alternativeName>
        <fullName evidence="1">16S rRNA dimethyladenosine transferase</fullName>
    </alternativeName>
    <alternativeName>
        <fullName evidence="1">16S rRNA dimethylase</fullName>
    </alternativeName>
    <alternativeName>
        <fullName evidence="1">S-adenosylmethionine-6-N', N'-adenosyl(rRNA) dimethyltransferase</fullName>
    </alternativeName>
</protein>
<evidence type="ECO:0000255" key="1">
    <source>
        <dbReference type="HAMAP-Rule" id="MF_00607"/>
    </source>
</evidence>
<accession>Q1ILA1</accession>
<feature type="chain" id="PRO_0000271895" description="Ribosomal RNA small subunit methyltransferase A">
    <location>
        <begin position="1"/>
        <end position="285"/>
    </location>
</feature>
<feature type="binding site" evidence="1">
    <location>
        <position position="21"/>
    </location>
    <ligand>
        <name>S-adenosyl-L-methionine</name>
        <dbReference type="ChEBI" id="CHEBI:59789"/>
    </ligand>
</feature>
<feature type="binding site" evidence="1">
    <location>
        <position position="23"/>
    </location>
    <ligand>
        <name>S-adenosyl-L-methionine</name>
        <dbReference type="ChEBI" id="CHEBI:59789"/>
    </ligand>
</feature>
<feature type="binding site" evidence="1">
    <location>
        <position position="48"/>
    </location>
    <ligand>
        <name>S-adenosyl-L-methionine</name>
        <dbReference type="ChEBI" id="CHEBI:59789"/>
    </ligand>
</feature>
<feature type="binding site" evidence="1">
    <location>
        <position position="69"/>
    </location>
    <ligand>
        <name>S-adenosyl-L-methionine</name>
        <dbReference type="ChEBI" id="CHEBI:59789"/>
    </ligand>
</feature>
<feature type="binding site" evidence="1">
    <location>
        <position position="94"/>
    </location>
    <ligand>
        <name>S-adenosyl-L-methionine</name>
        <dbReference type="ChEBI" id="CHEBI:59789"/>
    </ligand>
</feature>
<feature type="binding site" evidence="1">
    <location>
        <position position="127"/>
    </location>
    <ligand>
        <name>S-adenosyl-L-methionine</name>
        <dbReference type="ChEBI" id="CHEBI:59789"/>
    </ligand>
</feature>
<dbReference type="EC" id="2.1.1.182" evidence="1"/>
<dbReference type="EMBL" id="CP000360">
    <property type="protein sequence ID" value="ABF42349.1"/>
    <property type="molecule type" value="Genomic_DNA"/>
</dbReference>
<dbReference type="RefSeq" id="WP_011524148.1">
    <property type="nucleotide sequence ID" value="NC_008009.1"/>
</dbReference>
<dbReference type="SMR" id="Q1ILA1"/>
<dbReference type="STRING" id="204669.Acid345_3348"/>
<dbReference type="EnsemblBacteria" id="ABF42349">
    <property type="protein sequence ID" value="ABF42349"/>
    <property type="gene ID" value="Acid345_3348"/>
</dbReference>
<dbReference type="KEGG" id="aba:Acid345_3348"/>
<dbReference type="eggNOG" id="COG0030">
    <property type="taxonomic scope" value="Bacteria"/>
</dbReference>
<dbReference type="HOGENOM" id="CLU_041220_0_1_0"/>
<dbReference type="OrthoDB" id="9814755at2"/>
<dbReference type="Proteomes" id="UP000002432">
    <property type="component" value="Chromosome"/>
</dbReference>
<dbReference type="GO" id="GO:0005829">
    <property type="term" value="C:cytosol"/>
    <property type="evidence" value="ECO:0007669"/>
    <property type="project" value="TreeGrafter"/>
</dbReference>
<dbReference type="GO" id="GO:0052908">
    <property type="term" value="F:16S rRNA (adenine(1518)-N(6)/adenine(1519)-N(6))-dimethyltransferase activity"/>
    <property type="evidence" value="ECO:0007669"/>
    <property type="project" value="UniProtKB-EC"/>
</dbReference>
<dbReference type="GO" id="GO:0003723">
    <property type="term" value="F:RNA binding"/>
    <property type="evidence" value="ECO:0007669"/>
    <property type="project" value="UniProtKB-KW"/>
</dbReference>
<dbReference type="CDD" id="cd02440">
    <property type="entry name" value="AdoMet_MTases"/>
    <property type="match status" value="1"/>
</dbReference>
<dbReference type="Gene3D" id="1.10.8.100">
    <property type="entry name" value="Ribosomal RNA adenine dimethylase-like, domain 2"/>
    <property type="match status" value="1"/>
</dbReference>
<dbReference type="Gene3D" id="3.40.50.150">
    <property type="entry name" value="Vaccinia Virus protein VP39"/>
    <property type="match status" value="1"/>
</dbReference>
<dbReference type="HAMAP" id="MF_00607">
    <property type="entry name" value="16SrRNA_methyltr_A"/>
    <property type="match status" value="1"/>
</dbReference>
<dbReference type="InterPro" id="IPR001737">
    <property type="entry name" value="KsgA/Erm"/>
</dbReference>
<dbReference type="InterPro" id="IPR023165">
    <property type="entry name" value="rRNA_Ade_diMease-like_C"/>
</dbReference>
<dbReference type="InterPro" id="IPR020596">
    <property type="entry name" value="rRNA_Ade_Mease_Trfase_CS"/>
</dbReference>
<dbReference type="InterPro" id="IPR020598">
    <property type="entry name" value="rRNA_Ade_methylase_Trfase_N"/>
</dbReference>
<dbReference type="InterPro" id="IPR011530">
    <property type="entry name" value="rRNA_adenine_dimethylase"/>
</dbReference>
<dbReference type="InterPro" id="IPR029063">
    <property type="entry name" value="SAM-dependent_MTases_sf"/>
</dbReference>
<dbReference type="NCBIfam" id="TIGR00755">
    <property type="entry name" value="ksgA"/>
    <property type="match status" value="1"/>
</dbReference>
<dbReference type="PANTHER" id="PTHR11727">
    <property type="entry name" value="DIMETHYLADENOSINE TRANSFERASE"/>
    <property type="match status" value="1"/>
</dbReference>
<dbReference type="PANTHER" id="PTHR11727:SF7">
    <property type="entry name" value="DIMETHYLADENOSINE TRANSFERASE-RELATED"/>
    <property type="match status" value="1"/>
</dbReference>
<dbReference type="Pfam" id="PF00398">
    <property type="entry name" value="RrnaAD"/>
    <property type="match status" value="1"/>
</dbReference>
<dbReference type="SMART" id="SM00650">
    <property type="entry name" value="rADc"/>
    <property type="match status" value="1"/>
</dbReference>
<dbReference type="SUPFAM" id="SSF53335">
    <property type="entry name" value="S-adenosyl-L-methionine-dependent methyltransferases"/>
    <property type="match status" value="1"/>
</dbReference>
<dbReference type="PROSITE" id="PS01131">
    <property type="entry name" value="RRNA_A_DIMETH"/>
    <property type="match status" value="1"/>
</dbReference>
<dbReference type="PROSITE" id="PS51689">
    <property type="entry name" value="SAM_RNA_A_N6_MT"/>
    <property type="match status" value="1"/>
</dbReference>
<comment type="function">
    <text evidence="1">Specifically dimethylates two adjacent adenosines (A1518 and A1519) in the loop of a conserved hairpin near the 3'-end of 16S rRNA in the 30S particle. May play a critical role in biogenesis of 30S subunits.</text>
</comment>
<comment type="catalytic activity">
    <reaction evidence="1">
        <text>adenosine(1518)/adenosine(1519) in 16S rRNA + 4 S-adenosyl-L-methionine = N(6)-dimethyladenosine(1518)/N(6)-dimethyladenosine(1519) in 16S rRNA + 4 S-adenosyl-L-homocysteine + 4 H(+)</text>
        <dbReference type="Rhea" id="RHEA:19609"/>
        <dbReference type="Rhea" id="RHEA-COMP:10232"/>
        <dbReference type="Rhea" id="RHEA-COMP:10233"/>
        <dbReference type="ChEBI" id="CHEBI:15378"/>
        <dbReference type="ChEBI" id="CHEBI:57856"/>
        <dbReference type="ChEBI" id="CHEBI:59789"/>
        <dbReference type="ChEBI" id="CHEBI:74411"/>
        <dbReference type="ChEBI" id="CHEBI:74493"/>
        <dbReference type="EC" id="2.1.1.182"/>
    </reaction>
</comment>
<comment type="subcellular location">
    <subcellularLocation>
        <location evidence="1">Cytoplasm</location>
    </subcellularLocation>
</comment>
<comment type="similarity">
    <text evidence="1">Belongs to the class I-like SAM-binding methyltransferase superfamily. rRNA adenine N(6)-methyltransferase family. RsmA subfamily.</text>
</comment>
<sequence length="285" mass="31454">MPKMAAEKNSKPAKKAKLGQNFLSDASGALKIVEALGDISDATVVEIGPGRGAITDHLAKRAKRLIAVEIDRVLAAQLRLRYSRLENVEILEADILAVELSTVLAQRIGPLRDLRPTKPEKVRIIGNLPYYITSDILLRLFEAHALIDFAVIMVQKEVADRIAAKPGTRDYGLLSATSQLYTHVEKLFTLPPGSFNPAPQVHSTVLKLQMEPKLEALGVDEEGFDSFLKLIFGQKRKTLFNNLRVAYDMAKAREAMKAVGLKSDVRAEAVALEKTAQLYNELRKG</sequence>
<keyword id="KW-0963">Cytoplasm</keyword>
<keyword id="KW-0489">Methyltransferase</keyword>
<keyword id="KW-1185">Reference proteome</keyword>
<keyword id="KW-0694">RNA-binding</keyword>
<keyword id="KW-0698">rRNA processing</keyword>
<keyword id="KW-0949">S-adenosyl-L-methionine</keyword>
<keyword id="KW-0808">Transferase</keyword>
<name>RSMA_KORVE</name>